<gene>
    <name evidence="1" type="primary">htpG</name>
    <name type="ordered locus">Maqu_1054</name>
</gene>
<sequence>MTVEANKETLGFQTEVKQLLHLMIHSLYSNKEIFLRELISNASDAEDKLRFAALKDDKLFEGDSDLKIRLDYDKDAGTITIADNGIGMTRDDVIANLGTIAKSGTAEFLKQLSGDEKKDSKLIGQFGVGFYSAFIVADKVEVFTRKAGEPADNGVHWESKGDGEFTIEPVSREQRGTEIVLHLKPEDKEFADGWKLRSLVKKYSDHISFPVVMKSESEEEDKKGEEETVNDATALWTLPRTEIKDEEYKEFYKHIAHDFEDPLTWSHNKVEGKLDYTSLLYIPKRAPFDLYNREAPRGLKLYVQRVFIMDDAEQFLPLYLRFTKGVIDSNDLSLNVSREILQNDSTVESIRTALTKRVLDMLSKLAKKGGDEYQGFWDEFGTVLKEGPAEDFSNREKIAGLLRFASTHTGEATQNVSLDDYISRMKEGQNKIYYITGDNFAAAKSSPHLEVFRKKGIEVLILSDRIDEWMMGYLSEYDGKQFQDVARGDLDLGEVETEEDKKHQEEAAKEHKDLLERIKTALEDQVQEVRVTNRLTDSPACLVVGQFDMGAQMKKIMEAAGQKVPESKPIFEINVDHPLVQRLETEQGEQRFKELSAVLFDQATLASGEQLKDPGAYVSRLNRLLLELAN</sequence>
<name>HTPG_MARN8</name>
<keyword id="KW-0067">ATP-binding</keyword>
<keyword id="KW-0143">Chaperone</keyword>
<keyword id="KW-0963">Cytoplasm</keyword>
<keyword id="KW-0547">Nucleotide-binding</keyword>
<keyword id="KW-0346">Stress response</keyword>
<feature type="chain" id="PRO_1000014928" description="Chaperone protein HtpG">
    <location>
        <begin position="1"/>
        <end position="630"/>
    </location>
</feature>
<feature type="region of interest" description="A; substrate-binding" evidence="1">
    <location>
        <begin position="1"/>
        <end position="338"/>
    </location>
</feature>
<feature type="region of interest" description="B" evidence="1">
    <location>
        <begin position="339"/>
        <end position="555"/>
    </location>
</feature>
<feature type="region of interest" description="C" evidence="1">
    <location>
        <begin position="556"/>
        <end position="630"/>
    </location>
</feature>
<organism>
    <name type="scientific">Marinobacter nauticus (strain ATCC 700491 / DSM 11845 / VT8)</name>
    <name type="common">Marinobacter aquaeolei</name>
    <dbReference type="NCBI Taxonomy" id="351348"/>
    <lineage>
        <taxon>Bacteria</taxon>
        <taxon>Pseudomonadati</taxon>
        <taxon>Pseudomonadota</taxon>
        <taxon>Gammaproteobacteria</taxon>
        <taxon>Pseudomonadales</taxon>
        <taxon>Marinobacteraceae</taxon>
        <taxon>Marinobacter</taxon>
    </lineage>
</organism>
<reference key="1">
    <citation type="journal article" date="2011" name="Appl. Environ. Microbiol.">
        <title>Genomic potential of Marinobacter aquaeolei, a biogeochemical 'opportunitroph'.</title>
        <authorList>
            <person name="Singer E."/>
            <person name="Webb E.A."/>
            <person name="Nelson W.C."/>
            <person name="Heidelberg J.F."/>
            <person name="Ivanova N."/>
            <person name="Pati A."/>
            <person name="Edwards K.J."/>
        </authorList>
    </citation>
    <scope>NUCLEOTIDE SEQUENCE [LARGE SCALE GENOMIC DNA]</scope>
    <source>
        <strain>ATCC 700491 / DSM 11845 / VT8</strain>
    </source>
</reference>
<evidence type="ECO:0000255" key="1">
    <source>
        <dbReference type="HAMAP-Rule" id="MF_00505"/>
    </source>
</evidence>
<proteinExistence type="inferred from homology"/>
<comment type="function">
    <text evidence="1">Molecular chaperone. Has ATPase activity.</text>
</comment>
<comment type="subunit">
    <text evidence="1">Homodimer.</text>
</comment>
<comment type="subcellular location">
    <subcellularLocation>
        <location evidence="1">Cytoplasm</location>
    </subcellularLocation>
</comment>
<comment type="similarity">
    <text evidence="1">Belongs to the heat shock protein 90 family.</text>
</comment>
<protein>
    <recommendedName>
        <fullName evidence="1">Chaperone protein HtpG</fullName>
    </recommendedName>
    <alternativeName>
        <fullName evidence="1">Heat shock protein HtpG</fullName>
    </alternativeName>
    <alternativeName>
        <fullName evidence="1">High temperature protein G</fullName>
    </alternativeName>
</protein>
<accession>A1TZH7</accession>
<dbReference type="EMBL" id="CP000514">
    <property type="protein sequence ID" value="ABM18146.1"/>
    <property type="molecule type" value="Genomic_DNA"/>
</dbReference>
<dbReference type="RefSeq" id="WP_011784564.1">
    <property type="nucleotide sequence ID" value="NC_008740.1"/>
</dbReference>
<dbReference type="SMR" id="A1TZH7"/>
<dbReference type="STRING" id="351348.Maqu_1054"/>
<dbReference type="KEGG" id="maq:Maqu_1054"/>
<dbReference type="eggNOG" id="COG0326">
    <property type="taxonomic scope" value="Bacteria"/>
</dbReference>
<dbReference type="HOGENOM" id="CLU_006684_3_0_6"/>
<dbReference type="OrthoDB" id="9802640at2"/>
<dbReference type="Proteomes" id="UP000000998">
    <property type="component" value="Chromosome"/>
</dbReference>
<dbReference type="GO" id="GO:0005737">
    <property type="term" value="C:cytoplasm"/>
    <property type="evidence" value="ECO:0007669"/>
    <property type="project" value="UniProtKB-SubCell"/>
</dbReference>
<dbReference type="GO" id="GO:0005524">
    <property type="term" value="F:ATP binding"/>
    <property type="evidence" value="ECO:0007669"/>
    <property type="project" value="UniProtKB-UniRule"/>
</dbReference>
<dbReference type="GO" id="GO:0016887">
    <property type="term" value="F:ATP hydrolysis activity"/>
    <property type="evidence" value="ECO:0007669"/>
    <property type="project" value="InterPro"/>
</dbReference>
<dbReference type="GO" id="GO:0140662">
    <property type="term" value="F:ATP-dependent protein folding chaperone"/>
    <property type="evidence" value="ECO:0007669"/>
    <property type="project" value="InterPro"/>
</dbReference>
<dbReference type="GO" id="GO:0051082">
    <property type="term" value="F:unfolded protein binding"/>
    <property type="evidence" value="ECO:0007669"/>
    <property type="project" value="UniProtKB-UniRule"/>
</dbReference>
<dbReference type="CDD" id="cd16927">
    <property type="entry name" value="HATPase_Hsp90-like"/>
    <property type="match status" value="1"/>
</dbReference>
<dbReference type="FunFam" id="3.30.230.80:FF:000002">
    <property type="entry name" value="Molecular chaperone HtpG"/>
    <property type="match status" value="1"/>
</dbReference>
<dbReference type="FunFam" id="3.30.565.10:FF:000009">
    <property type="entry name" value="Molecular chaperone HtpG"/>
    <property type="match status" value="1"/>
</dbReference>
<dbReference type="FunFam" id="3.40.50.11260:FF:000002">
    <property type="entry name" value="Molecular chaperone HtpG"/>
    <property type="match status" value="1"/>
</dbReference>
<dbReference type="Gene3D" id="3.30.230.80">
    <property type="match status" value="1"/>
</dbReference>
<dbReference type="Gene3D" id="3.40.50.11260">
    <property type="match status" value="1"/>
</dbReference>
<dbReference type="Gene3D" id="1.20.120.790">
    <property type="entry name" value="Heat shock protein 90, C-terminal domain"/>
    <property type="match status" value="1"/>
</dbReference>
<dbReference type="Gene3D" id="3.30.565.10">
    <property type="entry name" value="Histidine kinase-like ATPase, C-terminal domain"/>
    <property type="match status" value="1"/>
</dbReference>
<dbReference type="HAMAP" id="MF_00505">
    <property type="entry name" value="HSP90"/>
    <property type="match status" value="1"/>
</dbReference>
<dbReference type="InterPro" id="IPR036890">
    <property type="entry name" value="HATPase_C_sf"/>
</dbReference>
<dbReference type="InterPro" id="IPR019805">
    <property type="entry name" value="Heat_shock_protein_90_CS"/>
</dbReference>
<dbReference type="InterPro" id="IPR037196">
    <property type="entry name" value="HSP90_C"/>
</dbReference>
<dbReference type="InterPro" id="IPR001404">
    <property type="entry name" value="Hsp90_fam"/>
</dbReference>
<dbReference type="InterPro" id="IPR020575">
    <property type="entry name" value="Hsp90_N"/>
</dbReference>
<dbReference type="InterPro" id="IPR020568">
    <property type="entry name" value="Ribosomal_Su5_D2-typ_SF"/>
</dbReference>
<dbReference type="NCBIfam" id="NF003555">
    <property type="entry name" value="PRK05218.1"/>
    <property type="match status" value="1"/>
</dbReference>
<dbReference type="PANTHER" id="PTHR11528">
    <property type="entry name" value="HEAT SHOCK PROTEIN 90 FAMILY MEMBER"/>
    <property type="match status" value="1"/>
</dbReference>
<dbReference type="Pfam" id="PF13589">
    <property type="entry name" value="HATPase_c_3"/>
    <property type="match status" value="1"/>
</dbReference>
<dbReference type="Pfam" id="PF00183">
    <property type="entry name" value="HSP90"/>
    <property type="match status" value="1"/>
</dbReference>
<dbReference type="PIRSF" id="PIRSF002583">
    <property type="entry name" value="Hsp90"/>
    <property type="match status" value="1"/>
</dbReference>
<dbReference type="PRINTS" id="PR00775">
    <property type="entry name" value="HEATSHOCK90"/>
</dbReference>
<dbReference type="SMART" id="SM00387">
    <property type="entry name" value="HATPase_c"/>
    <property type="match status" value="1"/>
</dbReference>
<dbReference type="SUPFAM" id="SSF55874">
    <property type="entry name" value="ATPase domain of HSP90 chaperone/DNA topoisomerase II/histidine kinase"/>
    <property type="match status" value="1"/>
</dbReference>
<dbReference type="SUPFAM" id="SSF110942">
    <property type="entry name" value="HSP90 C-terminal domain"/>
    <property type="match status" value="1"/>
</dbReference>
<dbReference type="SUPFAM" id="SSF54211">
    <property type="entry name" value="Ribosomal protein S5 domain 2-like"/>
    <property type="match status" value="1"/>
</dbReference>
<dbReference type="PROSITE" id="PS00298">
    <property type="entry name" value="HSP90"/>
    <property type="match status" value="1"/>
</dbReference>